<organism>
    <name type="scientific">Buchnera aphidicola subsp. Acyrthosiphon pisum (strain APS)</name>
    <name type="common">Acyrthosiphon pisum symbiotic bacterium</name>
    <dbReference type="NCBI Taxonomy" id="107806"/>
    <lineage>
        <taxon>Bacteria</taxon>
        <taxon>Pseudomonadati</taxon>
        <taxon>Pseudomonadota</taxon>
        <taxon>Gammaproteobacteria</taxon>
        <taxon>Enterobacterales</taxon>
        <taxon>Erwiniaceae</taxon>
        <taxon>Buchnera</taxon>
    </lineage>
</organism>
<sequence>MNRYQETFKRLSCLKEGCFIPFVVLGDPSLETSIKIIETLIKSGADALEIGIPFSDPLADGPTVQKSNLRALSKNNTFFEYFKILKQLRKKNKKLPIGILIYANLVYNQGIDNFYFQCFNSGLDSVLIADVPIEESKIFYNIANKYKINPIFICPPDADADFLYKISLYAQGFIYVLSRPGVTGIKNNTIALPRDFINKIKKYNSVPLLQGFGISNPKQIKEAISSGLSGVICGSAIINIIEKYLNQEKKMIKEIKKFTHLLKLSTKLE</sequence>
<accession>P57365</accession>
<proteinExistence type="inferred from homology"/>
<name>TRPA_BUCAI</name>
<evidence type="ECO:0000255" key="1">
    <source>
        <dbReference type="HAMAP-Rule" id="MF_00131"/>
    </source>
</evidence>
<comment type="function">
    <text evidence="1">The alpha subunit is responsible for the aldol cleavage of indoleglycerol phosphate to indole and glyceraldehyde 3-phosphate.</text>
</comment>
<comment type="catalytic activity">
    <reaction evidence="1">
        <text>(1S,2R)-1-C-(indol-3-yl)glycerol 3-phosphate + L-serine = D-glyceraldehyde 3-phosphate + L-tryptophan + H2O</text>
        <dbReference type="Rhea" id="RHEA:10532"/>
        <dbReference type="ChEBI" id="CHEBI:15377"/>
        <dbReference type="ChEBI" id="CHEBI:33384"/>
        <dbReference type="ChEBI" id="CHEBI:57912"/>
        <dbReference type="ChEBI" id="CHEBI:58866"/>
        <dbReference type="ChEBI" id="CHEBI:59776"/>
        <dbReference type="EC" id="4.2.1.20"/>
    </reaction>
</comment>
<comment type="pathway">
    <text evidence="1">Amino-acid biosynthesis; L-tryptophan biosynthesis; L-tryptophan from chorismate: step 5/5.</text>
</comment>
<comment type="subunit">
    <text evidence="1">Tetramer of two alpha and two beta chains.</text>
</comment>
<comment type="similarity">
    <text evidence="1">Belongs to the TrpA family.</text>
</comment>
<keyword id="KW-0028">Amino-acid biosynthesis</keyword>
<keyword id="KW-0057">Aromatic amino acid biosynthesis</keyword>
<keyword id="KW-0456">Lyase</keyword>
<keyword id="KW-1185">Reference proteome</keyword>
<keyword id="KW-0822">Tryptophan biosynthesis</keyword>
<protein>
    <recommendedName>
        <fullName evidence="1">Tryptophan synthase alpha chain</fullName>
        <ecNumber evidence="1">4.2.1.20</ecNumber>
    </recommendedName>
</protein>
<reference key="1">
    <citation type="journal article" date="2000" name="Nature">
        <title>Genome sequence of the endocellular bacterial symbiont of aphids Buchnera sp. APS.</title>
        <authorList>
            <person name="Shigenobu S."/>
            <person name="Watanabe H."/>
            <person name="Hattori M."/>
            <person name="Sakaki Y."/>
            <person name="Ishikawa H."/>
        </authorList>
    </citation>
    <scope>NUCLEOTIDE SEQUENCE [LARGE SCALE GENOMIC DNA]</scope>
    <source>
        <strain>APS</strain>
    </source>
</reference>
<dbReference type="EC" id="4.2.1.20" evidence="1"/>
<dbReference type="EMBL" id="BA000003">
    <property type="protein sequence ID" value="BAB12987.1"/>
    <property type="molecule type" value="Genomic_DNA"/>
</dbReference>
<dbReference type="RefSeq" id="NP_240101.1">
    <property type="nucleotide sequence ID" value="NC_002528.1"/>
</dbReference>
<dbReference type="RefSeq" id="WP_009874231.1">
    <property type="nucleotide sequence ID" value="NC_002528.1"/>
</dbReference>
<dbReference type="SMR" id="P57365"/>
<dbReference type="STRING" id="563178.BUAP5A_272"/>
<dbReference type="EnsemblBacteria" id="BAB12987">
    <property type="protein sequence ID" value="BAB12987"/>
    <property type="gene ID" value="BAB12987"/>
</dbReference>
<dbReference type="KEGG" id="buc:BU277"/>
<dbReference type="PATRIC" id="fig|107806.10.peg.287"/>
<dbReference type="eggNOG" id="COG0159">
    <property type="taxonomic scope" value="Bacteria"/>
</dbReference>
<dbReference type="HOGENOM" id="CLU_016734_0_4_6"/>
<dbReference type="UniPathway" id="UPA00035">
    <property type="reaction ID" value="UER00044"/>
</dbReference>
<dbReference type="Proteomes" id="UP000001806">
    <property type="component" value="Chromosome"/>
</dbReference>
<dbReference type="GO" id="GO:0005829">
    <property type="term" value="C:cytosol"/>
    <property type="evidence" value="ECO:0007669"/>
    <property type="project" value="TreeGrafter"/>
</dbReference>
<dbReference type="GO" id="GO:0004834">
    <property type="term" value="F:tryptophan synthase activity"/>
    <property type="evidence" value="ECO:0007669"/>
    <property type="project" value="UniProtKB-UniRule"/>
</dbReference>
<dbReference type="CDD" id="cd04724">
    <property type="entry name" value="Tryptophan_synthase_alpha"/>
    <property type="match status" value="1"/>
</dbReference>
<dbReference type="FunFam" id="3.20.20.70:FF:000037">
    <property type="entry name" value="Tryptophan synthase alpha chain"/>
    <property type="match status" value="1"/>
</dbReference>
<dbReference type="Gene3D" id="3.20.20.70">
    <property type="entry name" value="Aldolase class I"/>
    <property type="match status" value="1"/>
</dbReference>
<dbReference type="HAMAP" id="MF_00131">
    <property type="entry name" value="Trp_synth_alpha"/>
    <property type="match status" value="1"/>
</dbReference>
<dbReference type="InterPro" id="IPR013785">
    <property type="entry name" value="Aldolase_TIM"/>
</dbReference>
<dbReference type="InterPro" id="IPR011060">
    <property type="entry name" value="RibuloseP-bd_barrel"/>
</dbReference>
<dbReference type="InterPro" id="IPR018204">
    <property type="entry name" value="Trp_synthase_alpha_AS"/>
</dbReference>
<dbReference type="InterPro" id="IPR002028">
    <property type="entry name" value="Trp_synthase_suA"/>
</dbReference>
<dbReference type="NCBIfam" id="TIGR00262">
    <property type="entry name" value="trpA"/>
    <property type="match status" value="1"/>
</dbReference>
<dbReference type="PANTHER" id="PTHR43406:SF1">
    <property type="entry name" value="TRYPTOPHAN SYNTHASE ALPHA CHAIN, CHLOROPLASTIC"/>
    <property type="match status" value="1"/>
</dbReference>
<dbReference type="PANTHER" id="PTHR43406">
    <property type="entry name" value="TRYPTOPHAN SYNTHASE, ALPHA CHAIN"/>
    <property type="match status" value="1"/>
</dbReference>
<dbReference type="Pfam" id="PF00290">
    <property type="entry name" value="Trp_syntA"/>
    <property type="match status" value="1"/>
</dbReference>
<dbReference type="SUPFAM" id="SSF51366">
    <property type="entry name" value="Ribulose-phoshate binding barrel"/>
    <property type="match status" value="1"/>
</dbReference>
<dbReference type="PROSITE" id="PS00167">
    <property type="entry name" value="TRP_SYNTHASE_ALPHA"/>
    <property type="match status" value="1"/>
</dbReference>
<feature type="chain" id="PRO_0000098754" description="Tryptophan synthase alpha chain">
    <location>
        <begin position="1"/>
        <end position="269"/>
    </location>
</feature>
<feature type="active site" description="Proton acceptor" evidence="1">
    <location>
        <position position="49"/>
    </location>
</feature>
<feature type="active site" description="Proton acceptor" evidence="1">
    <location>
        <position position="60"/>
    </location>
</feature>
<gene>
    <name evidence="1" type="primary">trpA</name>
    <name type="ordered locus">BU277</name>
</gene>